<organismHost>
    <name type="scientific">Mesocricetus auratus</name>
    <name type="common">Golden hamster</name>
    <dbReference type="NCBI Taxonomy" id="10036"/>
</organismHost>
<name>VP2_POVHA</name>
<protein>
    <recommendedName>
        <fullName>Minor capsid protein VP2</fullName>
    </recommendedName>
    <alternativeName>
        <fullName>Minor structural protein VP2</fullName>
    </alternativeName>
</protein>
<comment type="function">
    <molecule>Isoform VP2</molecule>
    <text evidence="1">Structural protein that resides within the core of the capsid surrounded by 72 VP1 pentamers. Participates in host cell receptor binding together with VP1. Following virus endocytosis and trafficking to the endoplasmic reticulum, VP2 and VP3 form oligomers and integrate into the endoplasmic reticulum membrane. Heterooligomer VP2-VP3 may create a viroporin for transporting the viral genome across the endoplasmic reticulum membrane to the cytoplasm. Nuclear entry of the viral DNA involves the selective exposure and importin recognition of VP2 or VP3 nuclear localization signal (shared C-terminus). Plays a role in virion assembly within the nucleus in particular through a DNA-binding domain located in the C-terminal region. A N-terminal myristoylation suggests a scaffold function for virion assembly (By similarity).</text>
</comment>
<comment type="function">
    <molecule>Isoform VP3</molecule>
    <text evidence="1">Structural protein that resides within the core of the capsid surrounded by 72 VP1 pentamers. Following virus endocytosis and trafficking to the endoplasmic reticulum, VP2 and VP3 form oligomers and integrate into the endoplasmic reticulum membrane. Heterooligomer VP2-VP3 may create a viroporin for transporting the viral genome across the endoplasmic reticulum membrane to the cytoplasm. Nuclear entry of the viral DNA involves the selective exposure and importin recognition of VP2 or VP3 nuclear localization signal (shared C-terminus). Plays a role in virion assembly within the nucleus (By similarity).</text>
</comment>
<comment type="subunit">
    <molecule>Isoform VP2</molecule>
    <text evidence="2">Forms homooligomers, and heterooligomers with VP3 in the endoplasmic reticulum membrane. Interacts (via D1 domain) with VP1.</text>
</comment>
<comment type="subunit">
    <molecule>Isoform VP3</molecule>
    <text evidence="1">Forms homooligomers, and heterooligomers with VP2 in the endoplasmic reticulum membrane. Interacts (via D1 domain) with VP1 (By similarity).</text>
</comment>
<comment type="subcellular location">
    <molecule>Isoform VP2</molecule>
    <subcellularLocation>
        <location>Virion</location>
    </subcellularLocation>
    <subcellularLocation>
        <location>Host nucleus</location>
    </subcellularLocation>
    <subcellularLocation>
        <location>Host endoplasmic reticulum</location>
    </subcellularLocation>
    <subcellularLocation>
        <location evidence="1">Host endoplasmic reticulum membrane</location>
    </subcellularLocation>
</comment>
<comment type="subcellular location">
    <molecule>Isoform VP3</molecule>
    <subcellularLocation>
        <location>Virion</location>
    </subcellularLocation>
    <subcellularLocation>
        <location>Host nucleus</location>
    </subcellularLocation>
    <subcellularLocation>
        <location>Host endoplasmic reticulum</location>
    </subcellularLocation>
    <subcellularLocation>
        <location evidence="1">Host endoplasmic reticulum membrane</location>
    </subcellularLocation>
</comment>
<comment type="alternative products">
    <event type="alternative splicing"/>
    <event type="alternative initiation"/>
    <isoform>
        <id>P03098-1</id>
        <name>VP2</name>
        <name>Minor capsid protein VP2</name>
        <sequence type="displayed"/>
    </isoform>
    <isoform>
        <id>P03098-2</id>
        <name>VP3</name>
        <name>Minor capsid protein VP3</name>
        <sequence type="described" ref="VSP_018918"/>
    </isoform>
    <isoform>
        <id>P03092-1</id>
        <name>VP1</name>
        <sequence type="external"/>
    </isoform>
</comment>
<comment type="miscellaneous">
    <molecule>Isoform VP2</molecule>
    <text>Produced by alternative splicing of the late mRNA.</text>
</comment>
<comment type="miscellaneous">
    <molecule>Isoform VP3</molecule>
    <text evidence="2">Produced by alternative initiation at Met-125 of isoform VP2.</text>
</comment>
<comment type="similarity">
    <text evidence="2">Belongs to the polyomaviruses capsid protein VP2 family.</text>
</comment>
<proteinExistence type="inferred from homology"/>
<accession>P03098</accession>
<accession>Q76V97</accession>
<reference key="1">
    <citation type="journal article" date="1985" name="EMBO J.">
        <title>A new member of the polyomavirus family: the hamster papovavirus. Complete nucleotide sequence and transformation properties.</title>
        <authorList>
            <person name="Delmas V."/>
            <person name="Bastien C."/>
            <person name="Scherneck S."/>
            <person name="Feunteun J."/>
        </authorList>
    </citation>
    <scope>NUCLEOTIDE SEQUENCE [GENOMIC DNA]</scope>
</reference>
<reference key="2">
    <citation type="journal article" date="2009" name="Virology">
        <title>The Polyomaviridae: Contributions of virus structure to our understanding of virus receptors and infectious entry.</title>
        <authorList>
            <person name="Neu U."/>
            <person name="Stehle T."/>
            <person name="Atwood W.J."/>
        </authorList>
    </citation>
    <scope>REVIEW</scope>
</reference>
<keyword id="KW-0024">Alternative initiation</keyword>
<keyword id="KW-0025">Alternative splicing</keyword>
<keyword id="KW-0167">Capsid protein</keyword>
<keyword id="KW-0238">DNA-binding</keyword>
<keyword id="KW-1038">Host endoplasmic reticulum</keyword>
<keyword id="KW-1043">Host membrane</keyword>
<keyword id="KW-1048">Host nucleus</keyword>
<keyword id="KW-0426">Late protein</keyword>
<keyword id="KW-0449">Lipoprotein</keyword>
<keyword id="KW-0472">Membrane</keyword>
<keyword id="KW-0519">Myristate</keyword>
<keyword id="KW-1185">Reference proteome</keyword>
<keyword id="KW-1163">Viral penetration into host nucleus</keyword>
<keyword id="KW-0946">Virion</keyword>
<keyword id="KW-1160">Virus entry into host cell</keyword>
<feature type="initiator methionine" description="Removed; by host" evidence="1">
    <location>
        <position position="1"/>
    </location>
</feature>
<feature type="chain" id="PRO_0000039209" description="Minor capsid protein VP2">
    <location>
        <begin position="2"/>
        <end position="345"/>
    </location>
</feature>
<feature type="region of interest" description="D1" evidence="1">
    <location>
        <begin position="289"/>
        <end position="324"/>
    </location>
</feature>
<feature type="region of interest" description="DNA-binding" evidence="1">
    <location>
        <begin position="329"/>
        <end position="345"/>
    </location>
</feature>
<feature type="short sequence motif" description="Nuclear localization signal" evidence="1">
    <location>
        <begin position="336"/>
        <end position="344"/>
    </location>
</feature>
<feature type="lipid moiety-binding region" description="N-myristoyl glycine; by host" evidence="1">
    <location>
        <position position="2"/>
    </location>
</feature>
<feature type="splice variant" id="VSP_018918" description="In isoform VP3." evidence="2">
    <location>
        <begin position="1"/>
        <end position="124"/>
    </location>
</feature>
<organism>
    <name type="scientific">Hamster polyomavirus</name>
    <name type="common">HaPyV</name>
    <name type="synonym">Mesocricetus auratus polyomavirus 1</name>
    <dbReference type="NCBI Taxonomy" id="1891729"/>
    <lineage>
        <taxon>Viruses</taxon>
        <taxon>Monodnaviria</taxon>
        <taxon>Shotokuvirae</taxon>
        <taxon>Cossaviricota</taxon>
        <taxon>Papovaviricetes</taxon>
        <taxon>Sepolyvirales</taxon>
        <taxon>Polyomaviridae</taxon>
        <taxon>Alphapolyomavirus</taxon>
    </lineage>
</organism>
<sequence length="345" mass="38609">MGSAISVIIEMISYLSEISSVTGISVEAILSGEAFAAIDAQVTSLITMEGFLGAETALSSIGLSEDMFIFMQAAPELTSTVMTEFVRESVQTAFIFQTVAGSAAFSLGSLHGYLAHEVPIVNRNMALIPRRPADYYDILFPGVQSFTHALDVIHGWGHSLFQSVGEYIWDTLRRETQGAVESAVRDLSLQTTHQFLDAIARMMENSRWVVTNLPREAYSRIYGGLQNYYAELPGINPAQRRQIERALEYSNRPSIEDANSRQVLEAELGRPDVQRRSQQQEDSSSWFESGANIMRYFAPGGAHQRVTPDWMLPLILGLYGDISPTWQTYIDEVEYGPKKKKRRFQ</sequence>
<evidence type="ECO:0000250" key="1"/>
<evidence type="ECO:0000305" key="2"/>
<dbReference type="EMBL" id="M26281">
    <property type="protein sequence ID" value="AAA67120.1"/>
    <property type="molecule type" value="Genomic_DNA"/>
</dbReference>
<dbReference type="EMBL" id="M26281">
    <property type="protein sequence ID" value="AAA67121.1"/>
    <property type="molecule type" value="Genomic_DNA"/>
</dbReference>
<dbReference type="EMBL" id="X02449">
    <property type="protein sequence ID" value="CAB59365.1"/>
    <property type="molecule type" value="Genomic_DNA"/>
</dbReference>
<dbReference type="EMBL" id="X02449">
    <property type="protein sequence ID" value="CAB59366.1"/>
    <property type="molecule type" value="Genomic_DNA"/>
</dbReference>
<dbReference type="PIR" id="A03636">
    <property type="entry name" value="VVVP2H"/>
</dbReference>
<dbReference type="Proteomes" id="UP000008477">
    <property type="component" value="Genome"/>
</dbReference>
<dbReference type="GO" id="GO:0043657">
    <property type="term" value="C:host cell"/>
    <property type="evidence" value="ECO:0007669"/>
    <property type="project" value="GOC"/>
</dbReference>
<dbReference type="GO" id="GO:0044167">
    <property type="term" value="C:host cell endoplasmic reticulum membrane"/>
    <property type="evidence" value="ECO:0007669"/>
    <property type="project" value="UniProtKB-SubCell"/>
</dbReference>
<dbReference type="GO" id="GO:0042025">
    <property type="term" value="C:host cell nucleus"/>
    <property type="evidence" value="ECO:0007669"/>
    <property type="project" value="UniProtKB-SubCell"/>
</dbReference>
<dbReference type="GO" id="GO:0016020">
    <property type="term" value="C:membrane"/>
    <property type="evidence" value="ECO:0007669"/>
    <property type="project" value="UniProtKB-KW"/>
</dbReference>
<dbReference type="GO" id="GO:0019028">
    <property type="term" value="C:viral capsid"/>
    <property type="evidence" value="ECO:0007669"/>
    <property type="project" value="UniProtKB-KW"/>
</dbReference>
<dbReference type="GO" id="GO:0003677">
    <property type="term" value="F:DNA binding"/>
    <property type="evidence" value="ECO:0007669"/>
    <property type="project" value="UniProtKB-KW"/>
</dbReference>
<dbReference type="GO" id="GO:0005198">
    <property type="term" value="F:structural molecule activity"/>
    <property type="evidence" value="ECO:0007669"/>
    <property type="project" value="InterPro"/>
</dbReference>
<dbReference type="GO" id="GO:0046718">
    <property type="term" value="P:symbiont entry into host cell"/>
    <property type="evidence" value="ECO:0007669"/>
    <property type="project" value="UniProtKB-KW"/>
</dbReference>
<dbReference type="GO" id="GO:0075732">
    <property type="term" value="P:viral penetration into host nucleus"/>
    <property type="evidence" value="ECO:0007669"/>
    <property type="project" value="UniProtKB-KW"/>
</dbReference>
<dbReference type="InterPro" id="IPR001070">
    <property type="entry name" value="Polyoma_coat_VP2"/>
</dbReference>
<dbReference type="Pfam" id="PF00761">
    <property type="entry name" value="Polyoma_coat2"/>
    <property type="match status" value="1"/>
</dbReference>
<dbReference type="PIRSF" id="PIRSF003377">
    <property type="entry name" value="Polyoma_coat2"/>
    <property type="match status" value="1"/>
</dbReference>